<keyword id="KW-0167">Capsid protein</keyword>
<keyword id="KW-0946">Virion</keyword>
<accession>J9RWN8</accession>
<protein>
    <recommendedName>
        <fullName evidence="3">Major capsid protein</fullName>
    </recommendedName>
</protein>
<dbReference type="EMBL" id="JX495043">
    <property type="protein sequence ID" value="AFR52292.1"/>
    <property type="molecule type" value="Genomic_DNA"/>
</dbReference>
<dbReference type="SMR" id="J9RWN8"/>
<dbReference type="OrthoDB" id="4340at10239"/>
<dbReference type="Proteomes" id="UP000259509">
    <property type="component" value="Genome"/>
</dbReference>
<dbReference type="GO" id="GO:0019028">
    <property type="term" value="C:viral capsid"/>
    <property type="evidence" value="ECO:0007669"/>
    <property type="project" value="UniProtKB-KW"/>
</dbReference>
<dbReference type="Gene3D" id="3.90.1690.10">
    <property type="entry name" value="phage-related protein like domain"/>
    <property type="match status" value="1"/>
</dbReference>
<dbReference type="InterPro" id="IPR053738">
    <property type="entry name" value="Lambda_capsid_assembly"/>
</dbReference>
<gene>
    <name evidence="6" type="ORF">HMPREFV_HMPID9886gp0036</name>
</gene>
<proteinExistence type="evidence at protein level"/>
<comment type="function">
    <text evidence="4">Probably the major capsid protein (PubMed:22885297).</text>
</comment>
<comment type="subunit">
    <text evidence="5">Multimerizes (PubMed:36750095).</text>
</comment>
<comment type="subcellular location">
    <subcellularLocation>
        <location evidence="5">Virion</location>
    </subcellularLocation>
</comment>
<comment type="miscellaneous">
    <text evidence="2 5">Mutations in this protein confer resistance to host-encoded CBASS viral defense (in P.aeruginosa PAO1 transformed with a CBASS type II-A(GA) system) (PubMed:36750095). The above mutations are predicted to lie on protein-protein interfaces within or between monomers (Probable) (PubMed:36750095).</text>
</comment>
<sequence length="309" mass="33768">MSNAPFPIDPELTAIAIAYRNGRMIADEVLPRVPVGKQEFKYWKYDLAQGFTVPETLVGRKSKPNEVEFSATDETSSTEDHGLDAPVPQADIDNAPTNYNPLGHATEQTTNLILLDREARTSKLVFNPNSYAAGNKRTLSGTDQWSDPASNPLPEITDALDSVILRPNIGVLGRRTATILRRHPKIVKAYNGTLGDEGMVPMAFLQELLELEAIYVGEARLNIARPGQNPSLIRAWGPHASFIYRDRLADTRNGTTFGLTGQWGDRVSGSIADPNIGLRGGQRVRVGESVKELVTAPDLGFFFENAVAA</sequence>
<name>CAPSD_BPPPJ</name>
<reference evidence="6" key="1">
    <citation type="journal article" date="2012" name="J. Bacteriol.">
        <title>The CRISPR/Cas adaptive immune system of Pseudomonas aeruginosa mediates resistance to naturally occurring and engineered phages.</title>
        <authorList>
            <person name="Cady K.C."/>
            <person name="Bondy-Denomy J."/>
            <person name="Heussler G.E."/>
            <person name="Davidson A.R."/>
            <person name="O'Toole G.A."/>
        </authorList>
    </citation>
    <scope>NUCLEOTIDE SEQUENCE [LARGE SCALE GENOMIC DNA]</scope>
    <source>
        <strain>JBD67</strain>
    </source>
</reference>
<reference key="2">
    <citation type="journal article" date="2023" name="Cell">
        <title>Bacteriophages inhibit and evade cGAS-like immune function in bacteria.</title>
        <authorList>
            <person name="Huiting E."/>
            <person name="Cao X."/>
            <person name="Ren J."/>
            <person name="Athukoralage J.S."/>
            <person name="Luo Z."/>
            <person name="Silas S."/>
            <person name="An N."/>
            <person name="Carion H."/>
            <person name="Zhou Y."/>
            <person name="Fraser J.S."/>
            <person name="Feng Y."/>
            <person name="Bondy-Denomy J."/>
        </authorList>
    </citation>
    <scope>FUNCTION</scope>
    <scope>MUTAGENESIS OF ASN-191 AND TRP-263</scope>
    <source>
        <strain>JBD67</strain>
    </source>
</reference>
<evidence type="ECO:0000256" key="1">
    <source>
        <dbReference type="SAM" id="MobiDB-lite"/>
    </source>
</evidence>
<evidence type="ECO:0000269" key="2">
    <source>
    </source>
</evidence>
<evidence type="ECO:0000303" key="3">
    <source>
    </source>
</evidence>
<evidence type="ECO:0000305" key="4">
    <source>
    </source>
</evidence>
<evidence type="ECO:0000305" key="5">
    <source>
    </source>
</evidence>
<evidence type="ECO:0000312" key="6">
    <source>
        <dbReference type="EMBL" id="AFR52292.1"/>
    </source>
</evidence>
<feature type="chain" id="PRO_0000459556" description="Major capsid protein">
    <location>
        <begin position="1"/>
        <end position="309"/>
    </location>
</feature>
<feature type="region of interest" description="Disordered" evidence="1">
    <location>
        <begin position="64"/>
        <end position="83"/>
    </location>
</feature>
<feature type="mutagenesis site" description="Escapes CBASS defense in P.aeruginosa strain PAO1." evidence="2">
    <original>N</original>
    <variation>H</variation>
    <location>
        <position position="191"/>
    </location>
</feature>
<feature type="mutagenesis site" description="Escapes CBASS defense in P.aeruginosa strain PAO1." evidence="2">
    <original>W</original>
    <variation>R</variation>
    <location>
        <position position="263"/>
    </location>
</feature>
<organism>
    <name type="scientific">Pseudomonas phage JBD67</name>
    <dbReference type="NCBI Taxonomy" id="1225793"/>
    <lineage>
        <taxon>Viruses</taxon>
        <taxon>Duplodnaviria</taxon>
        <taxon>Heunggongvirae</taxon>
        <taxon>Uroviricota</taxon>
        <taxon>Caudoviricetes</taxon>
        <taxon>Beetrevirus</taxon>
        <taxon>Beetrevirus JBD67</taxon>
    </lineage>
</organism>